<geneLocation type="plasmid">
    <name>pTrAB3</name>
</geneLocation>
<name>TTUC2_AGRVI</name>
<sequence length="364" mass="39271">MREYKIAAIPADGIGPEVIAAGLQVLEALEKRSGDFSIHTETFDWGSDYYKKNGVMMPADGLEQLKKFDAIFFGAVGAPDVPDHITLWGLRLPICQGFDQYANVRPTKVLPGITPPLRNCGPGDLDWVIVRENSEGEYSGHGGRAHKGLPEEVGTEVAIFTRVGVTRIMRYAFKLAQARPRKLLTVVTKSNAQRHGMVMWDEIAAEVSKEFPDVTWDKMLVDAMTVRMTLKPQSLDTIVATNLHADILSDLAGALAGSLGVAPTANIDPERRFPSMFEPIHGSAFDITGKGIANPVATFWTAAQMLEHLGEKDAATRLMSAVERVTEAGILTPDVGGTADTQQVTDAVCEAIAGSNILNMAAVG</sequence>
<feature type="chain" id="PRO_0000083814" description="Probable tartrate dehydrogenase/decarboxylase TtuC">
    <location>
        <begin position="1"/>
        <end position="364"/>
    </location>
</feature>
<feature type="binding site" evidence="2">
    <location>
        <position position="222"/>
    </location>
    <ligand>
        <name>Mn(2+)</name>
        <dbReference type="ChEBI" id="CHEBI:29035"/>
    </ligand>
</feature>
<feature type="binding site" evidence="2">
    <location>
        <position position="246"/>
    </location>
    <ligand>
        <name>Mn(2+)</name>
        <dbReference type="ChEBI" id="CHEBI:29035"/>
    </ligand>
</feature>
<feature type="binding site" evidence="2">
    <location>
        <position position="250"/>
    </location>
    <ligand>
        <name>Mn(2+)</name>
        <dbReference type="ChEBI" id="CHEBI:29035"/>
    </ligand>
</feature>
<gene>
    <name type="primary">ttuC</name>
</gene>
<comment type="function">
    <text evidence="3">Has multiple catalytic activities. Apart from catalyzing the oxidation of (+)-tartrate to oxaloglycolate, also converts meso-tartrate to D-glycerate and catalyzes the oxidative decarboxylation of D-malate to pyruvate.</text>
</comment>
<comment type="catalytic activity">
    <reaction evidence="3">
        <text>tartrate + NAD(+) = 2-hydroxy-3-oxosuccinate + NADH + H(+)</text>
        <dbReference type="Rhea" id="RHEA:18853"/>
        <dbReference type="ChEBI" id="CHEBI:15378"/>
        <dbReference type="ChEBI" id="CHEBI:30929"/>
        <dbReference type="ChEBI" id="CHEBI:57540"/>
        <dbReference type="ChEBI" id="CHEBI:57945"/>
        <dbReference type="ChEBI" id="CHEBI:58265"/>
        <dbReference type="EC" id="1.1.1.93"/>
    </reaction>
</comment>
<comment type="catalytic activity">
    <reaction evidence="3">
        <text>(2R,3S)-tartrate + NAD(+) = 2-hydroxy-3-oxosuccinate + NADH + H(+)</text>
        <dbReference type="Rhea" id="RHEA:16457"/>
        <dbReference type="ChEBI" id="CHEBI:15378"/>
        <dbReference type="ChEBI" id="CHEBI:30928"/>
        <dbReference type="ChEBI" id="CHEBI:57540"/>
        <dbReference type="ChEBI" id="CHEBI:57945"/>
        <dbReference type="ChEBI" id="CHEBI:58265"/>
        <dbReference type="EC" id="1.1.1.93"/>
    </reaction>
</comment>
<comment type="catalytic activity">
    <reaction evidence="3">
        <text>(2R,3R)-tartrate + NAD(+) = 2-hydroxy-3-oxosuccinate + NADH + H(+)</text>
        <dbReference type="Rhea" id="RHEA:15209"/>
        <dbReference type="ChEBI" id="CHEBI:15378"/>
        <dbReference type="ChEBI" id="CHEBI:30924"/>
        <dbReference type="ChEBI" id="CHEBI:57540"/>
        <dbReference type="ChEBI" id="CHEBI:57945"/>
        <dbReference type="ChEBI" id="CHEBI:58265"/>
        <dbReference type="EC" id="1.1.1.93"/>
    </reaction>
</comment>
<comment type="catalytic activity">
    <reaction evidence="3">
        <text>(2R,3R)-tartrate + H(+) = (R)-glycerate + CO2</text>
        <dbReference type="Rhea" id="RHEA:13317"/>
        <dbReference type="ChEBI" id="CHEBI:15378"/>
        <dbReference type="ChEBI" id="CHEBI:16526"/>
        <dbReference type="ChEBI" id="CHEBI:16659"/>
        <dbReference type="ChEBI" id="CHEBI:30924"/>
        <dbReference type="EC" id="4.1.1.73"/>
    </reaction>
</comment>
<comment type="catalytic activity">
    <reaction evidence="3">
        <text>(R)-malate + NAD(+) = pyruvate + CO2 + NADH</text>
        <dbReference type="Rhea" id="RHEA:18365"/>
        <dbReference type="ChEBI" id="CHEBI:15361"/>
        <dbReference type="ChEBI" id="CHEBI:15588"/>
        <dbReference type="ChEBI" id="CHEBI:16526"/>
        <dbReference type="ChEBI" id="CHEBI:57540"/>
        <dbReference type="ChEBI" id="CHEBI:57945"/>
        <dbReference type="EC" id="1.1.1.83"/>
    </reaction>
</comment>
<comment type="cofactor">
    <cofactor evidence="3">
        <name>Mg(2+)</name>
        <dbReference type="ChEBI" id="CHEBI:18420"/>
    </cofactor>
    <cofactor evidence="3">
        <name>Mn(2+)</name>
        <dbReference type="ChEBI" id="CHEBI:29035"/>
    </cofactor>
    <text evidence="2">Binds 1 Mg(2+) or Mn(2+) ion per subunit.</text>
</comment>
<comment type="cofactor">
    <cofactor evidence="3">
        <name>K(+)</name>
        <dbReference type="ChEBI" id="CHEBI:29103"/>
    </cofactor>
</comment>
<comment type="pathway">
    <text>Carbohydrate acid metabolism; tartrate degradation; 2-hydroxy-3-oxosuccinate from L-tartrate: step 1/1.</text>
</comment>
<comment type="pathway">
    <text>Carbohydrate acid metabolism; tartrate degradation; 2-hydroxy-3-oxosuccinate from meso-tartrate: step 1/1.</text>
</comment>
<comment type="pathway">
    <text>Carbohydrate acid metabolism; tartrate degradation; D-glycerate from L-tartrate: step 1/1.</text>
</comment>
<comment type="subcellular location">
    <subcellularLocation>
        <location evidence="1">Cytoplasm</location>
    </subcellularLocation>
</comment>
<comment type="induction">
    <text>By tartrate.</text>
</comment>
<comment type="similarity">
    <text evidence="4">Belongs to the isocitrate and isopropylmalate dehydrogenases family.</text>
</comment>
<protein>
    <recommendedName>
        <fullName>Probable tartrate dehydrogenase/decarboxylase TtuC</fullName>
        <shortName>TDH</shortName>
        <ecNumber evidence="3">1.1.1.93</ecNumber>
        <ecNumber evidence="3">4.1.1.73</ecNumber>
    </recommendedName>
    <alternativeName>
        <fullName>D-malate dehydrogenase [decarboxylating]</fullName>
        <ecNumber evidence="3">1.1.1.83</ecNumber>
    </alternativeName>
</protein>
<proteinExistence type="evidence at transcript level"/>
<dbReference type="EC" id="1.1.1.93" evidence="3"/>
<dbReference type="EC" id="4.1.1.73" evidence="3"/>
<dbReference type="EC" id="1.1.1.83" evidence="3"/>
<dbReference type="EMBL" id="U32375">
    <property type="protein sequence ID" value="AAB61623.1"/>
    <property type="molecule type" value="Genomic_DNA"/>
</dbReference>
<dbReference type="RefSeq" id="WP_032488976.1">
    <property type="nucleotide sequence ID" value="NZ_MAVS02000009.1"/>
</dbReference>
<dbReference type="SMR" id="P70787"/>
<dbReference type="UniPathway" id="UPA00839">
    <property type="reaction ID" value="UER00800"/>
</dbReference>
<dbReference type="UniPathway" id="UPA00839">
    <property type="reaction ID" value="UER00801"/>
</dbReference>
<dbReference type="UniPathway" id="UPA00839">
    <property type="reaction ID" value="UER00803"/>
</dbReference>
<dbReference type="GO" id="GO:0005737">
    <property type="term" value="C:cytoplasm"/>
    <property type="evidence" value="ECO:0007669"/>
    <property type="project" value="UniProtKB-SubCell"/>
</dbReference>
<dbReference type="GO" id="GO:0046553">
    <property type="term" value="F:D-malate dehydrogenase (decarboxylating) (NAD+) activity"/>
    <property type="evidence" value="ECO:0007669"/>
    <property type="project" value="UniProtKB-EC"/>
</dbReference>
<dbReference type="GO" id="GO:0000287">
    <property type="term" value="F:magnesium ion binding"/>
    <property type="evidence" value="ECO:0007669"/>
    <property type="project" value="InterPro"/>
</dbReference>
<dbReference type="GO" id="GO:0051287">
    <property type="term" value="F:NAD binding"/>
    <property type="evidence" value="ECO:0007669"/>
    <property type="project" value="InterPro"/>
</dbReference>
<dbReference type="GO" id="GO:0050319">
    <property type="term" value="F:tartrate decarboxylase activity"/>
    <property type="evidence" value="ECO:0007669"/>
    <property type="project" value="UniProtKB-EC"/>
</dbReference>
<dbReference type="GO" id="GO:0009027">
    <property type="term" value="F:tartrate dehydrogenase activity"/>
    <property type="evidence" value="ECO:0007669"/>
    <property type="project" value="UniProtKB-EC"/>
</dbReference>
<dbReference type="Gene3D" id="3.40.718.10">
    <property type="entry name" value="Isopropylmalate Dehydrogenase"/>
    <property type="match status" value="1"/>
</dbReference>
<dbReference type="InterPro" id="IPR050501">
    <property type="entry name" value="ICDH/IPMDH"/>
</dbReference>
<dbReference type="InterPro" id="IPR019818">
    <property type="entry name" value="IsoCit/isopropylmalate_DH_CS"/>
</dbReference>
<dbReference type="InterPro" id="IPR024084">
    <property type="entry name" value="IsoPropMal-DH-like_dom"/>
</dbReference>
<dbReference type="InterPro" id="IPR011829">
    <property type="entry name" value="TTC_DH"/>
</dbReference>
<dbReference type="NCBIfam" id="TIGR02089">
    <property type="entry name" value="TTC"/>
    <property type="match status" value="1"/>
</dbReference>
<dbReference type="PANTHER" id="PTHR43275">
    <property type="entry name" value="D-MALATE DEHYDROGENASE [DECARBOXYLATING]"/>
    <property type="match status" value="1"/>
</dbReference>
<dbReference type="PANTHER" id="PTHR43275:SF1">
    <property type="entry name" value="D-MALATE DEHYDROGENASE [DECARBOXYLATING]"/>
    <property type="match status" value="1"/>
</dbReference>
<dbReference type="Pfam" id="PF00180">
    <property type="entry name" value="Iso_dh"/>
    <property type="match status" value="1"/>
</dbReference>
<dbReference type="SMART" id="SM01329">
    <property type="entry name" value="Iso_dh"/>
    <property type="match status" value="1"/>
</dbReference>
<dbReference type="SUPFAM" id="SSF53659">
    <property type="entry name" value="Isocitrate/Isopropylmalate dehydrogenase-like"/>
    <property type="match status" value="1"/>
</dbReference>
<dbReference type="PROSITE" id="PS00470">
    <property type="entry name" value="IDH_IMDH"/>
    <property type="match status" value="1"/>
</dbReference>
<evidence type="ECO:0000250" key="1"/>
<evidence type="ECO:0000250" key="2">
    <source>
        <dbReference type="UniProtKB" id="P37412"/>
    </source>
</evidence>
<evidence type="ECO:0000250" key="3">
    <source>
        <dbReference type="UniProtKB" id="Q51945"/>
    </source>
</evidence>
<evidence type="ECO:0000305" key="4"/>
<organism>
    <name type="scientific">Agrobacterium vitis</name>
    <name type="common">Rhizobium vitis</name>
    <dbReference type="NCBI Taxonomy" id="373"/>
    <lineage>
        <taxon>Bacteria</taxon>
        <taxon>Pseudomonadati</taxon>
        <taxon>Pseudomonadota</taxon>
        <taxon>Alphaproteobacteria</taxon>
        <taxon>Hyphomicrobiales</taxon>
        <taxon>Rhizobiaceae</taxon>
        <taxon>Rhizobium/Agrobacterium group</taxon>
        <taxon>Agrobacterium</taxon>
    </lineage>
</organism>
<reference key="1">
    <citation type="journal article" date="1996" name="Mol. Plant Microbe Interact.">
        <title>Characterization and distribution of tartrate utilization genes in the grapevine pathogen Agrobacterium vitis.</title>
        <authorList>
            <person name="Salomone J.-Y."/>
            <person name="Crouzet P."/>
            <person name="de Ruffray P."/>
            <person name="Otten L."/>
        </authorList>
    </citation>
    <scope>NUCLEOTIDE SEQUENCE [GENOMIC DNA]</scope>
    <source>
        <strain>AB3</strain>
    </source>
</reference>
<keyword id="KW-0963">Cytoplasm</keyword>
<keyword id="KW-0456">Lyase</keyword>
<keyword id="KW-0464">Manganese</keyword>
<keyword id="KW-0479">Metal-binding</keyword>
<keyword id="KW-0520">NAD</keyword>
<keyword id="KW-0560">Oxidoreductase</keyword>
<keyword id="KW-0614">Plasmid</keyword>
<accession>P70787</accession>